<accession>Q914L1</accession>
<keyword id="KW-1185">Reference proteome</keyword>
<dbReference type="EMBL" id="AF440571">
    <property type="protein sequence ID" value="AAL27730.1"/>
    <property type="molecule type" value="Genomic_DNA"/>
</dbReference>
<dbReference type="RefSeq" id="NP_445684.1">
    <property type="nucleotide sequence ID" value="NC_003214.2"/>
</dbReference>
<dbReference type="SMR" id="Q914L1"/>
<dbReference type="GeneID" id="922310"/>
<dbReference type="KEGG" id="vg:922310"/>
<dbReference type="Proteomes" id="UP000007017">
    <property type="component" value="Segment"/>
</dbReference>
<organismHost>
    <name type="scientific">Saccharolobus islandicus</name>
    <name type="common">Sulfolobus islandicus</name>
    <dbReference type="NCBI Taxonomy" id="43080"/>
</organismHost>
<proteinExistence type="predicted"/>
<reference key="1">
    <citation type="journal article" date="2000" name="Virology">
        <title>A novel lipothrixvirus, SIFV, of the extremely thermophilic crenarchaeon Sulfolobus.</title>
        <authorList>
            <person name="Arnold H.P."/>
            <person name="Zillig W."/>
            <person name="Ziese U."/>
            <person name="Holz I."/>
            <person name="Crosby M."/>
            <person name="Utterback T."/>
            <person name="Weidmann J.F."/>
            <person name="Umayam L.A."/>
            <person name="Teffera K."/>
            <person name="Kristjanson J.K."/>
            <person name="Klenk H.P."/>
            <person name="Nelson K.E."/>
            <person name="Fraser C.M."/>
        </authorList>
    </citation>
    <scope>NUCLEOTIDE SEQUENCE [GENOMIC DNA]</scope>
</reference>
<gene>
    <name type="primary">SIFV0019</name>
</gene>
<feature type="chain" id="PRO_0000385435" description="Uncharacterized protein 19">
    <location>
        <begin position="1"/>
        <end position="94"/>
    </location>
</feature>
<name>Y019_SIFVH</name>
<sequence>MNEQINEQIEFGEKYVKINDKFFYMSTENVEFIQWWYERFGHIKGIQFMEKLVKLFIIAKPEDYNDQWYVLDILKKHEKEISPLINLIYSNYEK</sequence>
<organism>
    <name type="scientific">Sulfolobus islandicus filamentous virus (isolate Iceland/Hveragerdi)</name>
    <name type="common">SIFV</name>
    <dbReference type="NCBI Taxonomy" id="654908"/>
    <lineage>
        <taxon>Viruses</taxon>
        <taxon>Adnaviria</taxon>
        <taxon>Zilligvirae</taxon>
        <taxon>Taleaviricota</taxon>
        <taxon>Tokiviricetes</taxon>
        <taxon>Ligamenvirales</taxon>
        <taxon>Lipothrixviridae</taxon>
        <taxon>Betalipothrixvirus</taxon>
        <taxon>Sulfolobus islandicus filamentous virus</taxon>
    </lineage>
</organism>
<protein>
    <recommendedName>
        <fullName>Uncharacterized protein 19</fullName>
    </recommendedName>
</protein>